<gene>
    <name evidence="11 14" type="primary">SDK1</name>
</gene>
<comment type="function">
    <text evidence="3">Adhesion molecule that promotes lamina-specific synaptic connections in the retina. Expressed in specific subsets of interneurons and retinal ganglion cells (RGCs) and promotes synaptic connectivity via homophilic interactions.</text>
</comment>
<comment type="subunit">
    <text evidence="3">Homodimer; mediates homophilic interactions to promote cell adhesion.</text>
</comment>
<comment type="subcellular location">
    <subcellularLocation>
        <location evidence="3">Cell membrane</location>
        <topology evidence="3">Single-pass type I membrane protein</topology>
    </subcellularLocation>
    <subcellularLocation>
        <location evidence="3">Synapse</location>
    </subcellularLocation>
</comment>
<comment type="alternative products">
    <event type="alternative splicing"/>
    <isoform>
        <id>Q7Z5N4-1</id>
        <name>1</name>
        <sequence type="displayed"/>
    </isoform>
    <isoform>
        <id>Q7Z5N4-2</id>
        <name>2</name>
        <sequence type="described" ref="VSP_017517 VSP_017519"/>
    </isoform>
    <isoform>
        <id>Q7Z5N4-3</id>
        <name>3</name>
        <sequence type="described" ref="VSP_017518"/>
    </isoform>
</comment>
<comment type="tissue specificity">
    <text evidence="8">Up-regulated in glomeruli in HIV-associated nephropathy. In diseased glomeruli, significantly overexpressed and the expression is no longer restricted to mesangial cells but includes podocytes and parietal epithelial cells (PubMed:15213259).</text>
</comment>
<comment type="domain">
    <text evidence="1">Ig-like C2-type domains 1 and 2 mediate homophilic interactions.</text>
</comment>
<comment type="miscellaneous">
    <text evidence="8">Dysregulation of this protein may play an important role in podocyte dysfunction in HIV-associated nephropathy.</text>
</comment>
<comment type="similarity">
    <text evidence="13">Belongs to the sidekick family.</text>
</comment>
<reference key="1">
    <citation type="submission" date="2003-05" db="EMBL/GenBank/DDBJ databases">
        <title>Complete coding sequence of human sidekick homolog 1.</title>
        <authorList>
            <person name="Bonner T.I."/>
        </authorList>
    </citation>
    <scope>NUCLEOTIDE SEQUENCE [MRNA] (ISOFORM 1)</scope>
    <source>
        <tissue>Brain</tissue>
    </source>
</reference>
<reference key="2">
    <citation type="journal article" date="2004" name="Nat. Genet.">
        <title>Complete sequencing and characterization of 21,243 full-length human cDNAs.</title>
        <authorList>
            <person name="Ota T."/>
            <person name="Suzuki Y."/>
            <person name="Nishikawa T."/>
            <person name="Otsuki T."/>
            <person name="Sugiyama T."/>
            <person name="Irie R."/>
            <person name="Wakamatsu A."/>
            <person name="Hayashi K."/>
            <person name="Sato H."/>
            <person name="Nagai K."/>
            <person name="Kimura K."/>
            <person name="Makita H."/>
            <person name="Sekine M."/>
            <person name="Obayashi M."/>
            <person name="Nishi T."/>
            <person name="Shibahara T."/>
            <person name="Tanaka T."/>
            <person name="Ishii S."/>
            <person name="Yamamoto J."/>
            <person name="Saito K."/>
            <person name="Kawai Y."/>
            <person name="Isono Y."/>
            <person name="Nakamura Y."/>
            <person name="Nagahari K."/>
            <person name="Murakami K."/>
            <person name="Yasuda T."/>
            <person name="Iwayanagi T."/>
            <person name="Wagatsuma M."/>
            <person name="Shiratori A."/>
            <person name="Sudo H."/>
            <person name="Hosoiri T."/>
            <person name="Kaku Y."/>
            <person name="Kodaira H."/>
            <person name="Kondo H."/>
            <person name="Sugawara M."/>
            <person name="Takahashi M."/>
            <person name="Kanda K."/>
            <person name="Yokoi T."/>
            <person name="Furuya T."/>
            <person name="Kikkawa E."/>
            <person name="Omura Y."/>
            <person name="Abe K."/>
            <person name="Kamihara K."/>
            <person name="Katsuta N."/>
            <person name="Sato K."/>
            <person name="Tanikawa M."/>
            <person name="Yamazaki M."/>
            <person name="Ninomiya K."/>
            <person name="Ishibashi T."/>
            <person name="Yamashita H."/>
            <person name="Murakawa K."/>
            <person name="Fujimori K."/>
            <person name="Tanai H."/>
            <person name="Kimata M."/>
            <person name="Watanabe M."/>
            <person name="Hiraoka S."/>
            <person name="Chiba Y."/>
            <person name="Ishida S."/>
            <person name="Ono Y."/>
            <person name="Takiguchi S."/>
            <person name="Watanabe S."/>
            <person name="Yosida M."/>
            <person name="Hotuta T."/>
            <person name="Kusano J."/>
            <person name="Kanehori K."/>
            <person name="Takahashi-Fujii A."/>
            <person name="Hara H."/>
            <person name="Tanase T.-O."/>
            <person name="Nomura Y."/>
            <person name="Togiya S."/>
            <person name="Komai F."/>
            <person name="Hara R."/>
            <person name="Takeuchi K."/>
            <person name="Arita M."/>
            <person name="Imose N."/>
            <person name="Musashino K."/>
            <person name="Yuuki H."/>
            <person name="Oshima A."/>
            <person name="Sasaki N."/>
            <person name="Aotsuka S."/>
            <person name="Yoshikawa Y."/>
            <person name="Matsunawa H."/>
            <person name="Ichihara T."/>
            <person name="Shiohata N."/>
            <person name="Sano S."/>
            <person name="Moriya S."/>
            <person name="Momiyama H."/>
            <person name="Satoh N."/>
            <person name="Takami S."/>
            <person name="Terashima Y."/>
            <person name="Suzuki O."/>
            <person name="Nakagawa S."/>
            <person name="Senoh A."/>
            <person name="Mizoguchi H."/>
            <person name="Goto Y."/>
            <person name="Shimizu F."/>
            <person name="Wakebe H."/>
            <person name="Hishigaki H."/>
            <person name="Watanabe T."/>
            <person name="Sugiyama A."/>
            <person name="Takemoto M."/>
            <person name="Kawakami B."/>
            <person name="Yamazaki M."/>
            <person name="Watanabe K."/>
            <person name="Kumagai A."/>
            <person name="Itakura S."/>
            <person name="Fukuzumi Y."/>
            <person name="Fujimori Y."/>
            <person name="Komiyama M."/>
            <person name="Tashiro H."/>
            <person name="Tanigami A."/>
            <person name="Fujiwara T."/>
            <person name="Ono T."/>
            <person name="Yamada K."/>
            <person name="Fujii Y."/>
            <person name="Ozaki K."/>
            <person name="Hirao M."/>
            <person name="Ohmori Y."/>
            <person name="Kawabata A."/>
            <person name="Hikiji T."/>
            <person name="Kobatake N."/>
            <person name="Inagaki H."/>
            <person name="Ikema Y."/>
            <person name="Okamoto S."/>
            <person name="Okitani R."/>
            <person name="Kawakami T."/>
            <person name="Noguchi S."/>
            <person name="Itoh T."/>
            <person name="Shigeta K."/>
            <person name="Senba T."/>
            <person name="Matsumura K."/>
            <person name="Nakajima Y."/>
            <person name="Mizuno T."/>
            <person name="Morinaga M."/>
            <person name="Sasaki M."/>
            <person name="Togashi T."/>
            <person name="Oyama M."/>
            <person name="Hata H."/>
            <person name="Watanabe M."/>
            <person name="Komatsu T."/>
            <person name="Mizushima-Sugano J."/>
            <person name="Satoh T."/>
            <person name="Shirai Y."/>
            <person name="Takahashi Y."/>
            <person name="Nakagawa K."/>
            <person name="Okumura K."/>
            <person name="Nagase T."/>
            <person name="Nomura N."/>
            <person name="Kikuchi H."/>
            <person name="Masuho Y."/>
            <person name="Yamashita R."/>
            <person name="Nakai K."/>
            <person name="Yada T."/>
            <person name="Nakamura Y."/>
            <person name="Ohara O."/>
            <person name="Isogai T."/>
            <person name="Sugano S."/>
        </authorList>
    </citation>
    <scope>NUCLEOTIDE SEQUENCE [LARGE SCALE MRNA] (ISOFORM 2)</scope>
</reference>
<reference key="3">
    <citation type="journal article" date="2003" name="Nature">
        <title>The DNA sequence of human chromosome 7.</title>
        <authorList>
            <person name="Hillier L.W."/>
            <person name="Fulton R.S."/>
            <person name="Fulton L.A."/>
            <person name="Graves T.A."/>
            <person name="Pepin K.H."/>
            <person name="Wagner-McPherson C."/>
            <person name="Layman D."/>
            <person name="Maas J."/>
            <person name="Jaeger S."/>
            <person name="Walker R."/>
            <person name="Wylie K."/>
            <person name="Sekhon M."/>
            <person name="Becker M.C."/>
            <person name="O'Laughlin M.D."/>
            <person name="Schaller M.E."/>
            <person name="Fewell G.A."/>
            <person name="Delehaunty K.D."/>
            <person name="Miner T.L."/>
            <person name="Nash W.E."/>
            <person name="Cordes M."/>
            <person name="Du H."/>
            <person name="Sun H."/>
            <person name="Edwards J."/>
            <person name="Bradshaw-Cordum H."/>
            <person name="Ali J."/>
            <person name="Andrews S."/>
            <person name="Isak A."/>
            <person name="Vanbrunt A."/>
            <person name="Nguyen C."/>
            <person name="Du F."/>
            <person name="Lamar B."/>
            <person name="Courtney L."/>
            <person name="Kalicki J."/>
            <person name="Ozersky P."/>
            <person name="Bielicki L."/>
            <person name="Scott K."/>
            <person name="Holmes A."/>
            <person name="Harkins R."/>
            <person name="Harris A."/>
            <person name="Strong C.M."/>
            <person name="Hou S."/>
            <person name="Tomlinson C."/>
            <person name="Dauphin-Kohlberg S."/>
            <person name="Kozlowicz-Reilly A."/>
            <person name="Leonard S."/>
            <person name="Rohlfing T."/>
            <person name="Rock S.M."/>
            <person name="Tin-Wollam A.-M."/>
            <person name="Abbott A."/>
            <person name="Minx P."/>
            <person name="Maupin R."/>
            <person name="Strowmatt C."/>
            <person name="Latreille P."/>
            <person name="Miller N."/>
            <person name="Johnson D."/>
            <person name="Murray J."/>
            <person name="Woessner J.P."/>
            <person name="Wendl M.C."/>
            <person name="Yang S.-P."/>
            <person name="Schultz B.R."/>
            <person name="Wallis J.W."/>
            <person name="Spieth J."/>
            <person name="Bieri T.A."/>
            <person name="Nelson J.O."/>
            <person name="Berkowicz N."/>
            <person name="Wohldmann P.E."/>
            <person name="Cook L.L."/>
            <person name="Hickenbotham M.T."/>
            <person name="Eldred J."/>
            <person name="Williams D."/>
            <person name="Bedell J.A."/>
            <person name="Mardis E.R."/>
            <person name="Clifton S.W."/>
            <person name="Chissoe S.L."/>
            <person name="Marra M.A."/>
            <person name="Raymond C."/>
            <person name="Haugen E."/>
            <person name="Gillett W."/>
            <person name="Zhou Y."/>
            <person name="James R."/>
            <person name="Phelps K."/>
            <person name="Iadanoto S."/>
            <person name="Bubb K."/>
            <person name="Simms E."/>
            <person name="Levy R."/>
            <person name="Clendenning J."/>
            <person name="Kaul R."/>
            <person name="Kent W.J."/>
            <person name="Furey T.S."/>
            <person name="Baertsch R.A."/>
            <person name="Brent M.R."/>
            <person name="Keibler E."/>
            <person name="Flicek P."/>
            <person name="Bork P."/>
            <person name="Suyama M."/>
            <person name="Bailey J.A."/>
            <person name="Portnoy M.E."/>
            <person name="Torrents D."/>
            <person name="Chinwalla A.T."/>
            <person name="Gish W.R."/>
            <person name="Eddy S.R."/>
            <person name="McPherson J.D."/>
            <person name="Olson M.V."/>
            <person name="Eichler E.E."/>
            <person name="Green E.D."/>
            <person name="Waterston R.H."/>
            <person name="Wilson R.K."/>
        </authorList>
    </citation>
    <scope>NUCLEOTIDE SEQUENCE [LARGE SCALE GENOMIC DNA]</scope>
</reference>
<reference key="4">
    <citation type="submission" date="2002-01" db="EMBL/GenBank/DDBJ databases">
        <title>The nucleotide sequence of a long cDNA clone isolated from human spleen.</title>
        <authorList>
            <person name="Jikuya H."/>
            <person name="Takano J."/>
            <person name="Nomura N."/>
            <person name="Kikuno R."/>
            <person name="Nagase T."/>
            <person name="Ohara O."/>
        </authorList>
    </citation>
    <scope>NUCLEOTIDE SEQUENCE [LARGE SCALE MRNA] OF 723-2213 (ISOFORM 3)</scope>
    <scope>NUCLEOTIDE SEQUENCE [LARGE SCALE MRNA] OF 1642-2213 (ISOFORM 1)</scope>
    <scope>VARIANTS ASN-1016 AND ARG-1641</scope>
    <source>
        <tissue>Spleen</tissue>
    </source>
</reference>
<reference key="5">
    <citation type="journal article" date="2004" name="J. Am. Soc. Nephrol.">
        <title>Sidekick-1 is upregulated in glomeruli in HIV-associated nephropathy.</title>
        <authorList>
            <person name="Kaufman L."/>
            <person name="Hayashi K."/>
            <person name="Ross M.J."/>
            <person name="Ross M.D."/>
            <person name="Klotman P.E."/>
        </authorList>
    </citation>
    <scope>TISSUE SPECIFICITY</scope>
</reference>
<name>SDK1_HUMAN</name>
<evidence type="ECO:0000250" key="1">
    <source>
        <dbReference type="UniProtKB" id="Q3UH53"/>
    </source>
</evidence>
<evidence type="ECO:0000250" key="2">
    <source>
        <dbReference type="UniProtKB" id="Q6V4S5"/>
    </source>
</evidence>
<evidence type="ECO:0000250" key="3">
    <source>
        <dbReference type="UniProtKB" id="Q8AV58"/>
    </source>
</evidence>
<evidence type="ECO:0000255" key="4"/>
<evidence type="ECO:0000255" key="5">
    <source>
        <dbReference type="PROSITE-ProRule" id="PRU00114"/>
    </source>
</evidence>
<evidence type="ECO:0000255" key="6">
    <source>
        <dbReference type="PROSITE-ProRule" id="PRU00316"/>
    </source>
</evidence>
<evidence type="ECO:0000256" key="7">
    <source>
        <dbReference type="SAM" id="MobiDB-lite"/>
    </source>
</evidence>
<evidence type="ECO:0000269" key="8">
    <source>
    </source>
</evidence>
<evidence type="ECO:0000269" key="9">
    <source ref="4"/>
</evidence>
<evidence type="ECO:0000303" key="10">
    <source>
    </source>
</evidence>
<evidence type="ECO:0000303" key="11">
    <source>
    </source>
</evidence>
<evidence type="ECO:0000303" key="12">
    <source ref="4"/>
</evidence>
<evidence type="ECO:0000305" key="13"/>
<evidence type="ECO:0000312" key="14">
    <source>
        <dbReference type="HGNC" id="HGNC:19307"/>
    </source>
</evidence>
<accession>Q7Z5N4</accession>
<accession>Q8TEN9</accession>
<accession>Q8TEP5</accession>
<accession>Q96N44</accession>
<protein>
    <recommendedName>
        <fullName evidence="11">Protein sidekick-1</fullName>
    </recommendedName>
</protein>
<sequence>MARGARPSAAGGGGGGAEPPERAGPGRPRGSPPGRARPSLAPRPGPEPSRPRAAPETSGGDTAGAGRCGGRRAAKLGPGRRGWWALLALQLHLLRALAQDDVAPYFKTEPGLPQIHLEGNRLVLTCLAEGSWPLEFKWMRDDSELTTYSSEYKYIIPSLQKLDAGFYRCVVRNRMGALLQRKSEVQVAYMGSFMDTDQRKTVSQGRAAILNLLPITSYPRPQVTWFREGHKIIPSNRIAITLENQLVILATTTSDAGAYYVQAVNEKNGENKTSPFIHLSIARDVGTPETMAPTIVVPPGNRSVVAGSSETTLECIASARPVEDLSVTWKRNGVRITSGLHSFGRRLTISNPTSADTGPYVCEAALPGSAFEPARATAFLFIIEPPYFTAEPESRISAEVEETVDIGCQAMGVPLPTLQWYKDAISISRLQNPRYKVLASGGLRIQKLRPEDSGIFQCFASNEGGEIQTHTYLDVTNIAPVFTQRPVDTTVTDGMTAILRCEVSGAPKPAITWKRENHILASGSVRIPRFMLLESGGLQIAPVFIQDAGNYTCYAANTEGSLNASATLTVWNRTSIVHPPEDHVVIKGTTATLHCGATHDPRVSLRYVWKKDNVALTPSSTSRIVVEKDGSLLISQTWSGDIGDYSCEIVSEGGNDSRMARLEVIELPHSPQNLLVSPNSSHSHAVVLSWVRPFDGNSPILYYIVELSENNSPWKVHLSNVGPEMTGVTVSGLTPARTYQFRVCAVNEVGRGQYSAETSRLMLPEEPPSAPPKNIVASGRTNQSIMVQWQPPPETEHNGVLRGYILRYRLAGLPGEYQQRNITSPEVNYCLVTDLIIWTQYEIQVAAYNGAGLGVFSRAVTEYTLQGVPTAPPQNVQTEAVNSTTIQFLWNPPPQQFINGINQGYKLLAWPADAPEAVTVVTIAPDFHGVHHGHITNLKKFTAYFTSVLCFTTPGDGPPSTPQLVWTQEDKPGAVGHLSFTEILDTSLKVSWQEPLEKNGIITGYQISWEVYGRNDSRLTHTLNSTTHEYKIQGLSSLTTYTIDVAAVTAVGTGLVTSSTISSGVPPDLPGAPSNLVISNISPRSATLQFRPGYDGKTSISRWIVEGQVGAIGDEEEWVTLYEEENEPDAQMLEIPNLTPYTHYRFRMKQVNIVGPSPYSPSSRVIQTLQAPPDVAPTSVTVRTASETSLRLRWVPLPDSQYNGNPESVGYRIKYWRSDLQSSAVAQVVSDRLEREFTIEELEEWMEYELQMQAFNAVGAGPWSEVVRGRTRESVPSAAPENVSAEAVSSTQILLTWTSVPEQDQNGLILGYKILFRAKDLDPEPRSHIVRGNHTQSALLAGLRKFVLYELQVLAFTRIGNGVPSTPLILERTKDDAPGPPVRLVFPEVRLTSVRIVWQPPEEPNGIILGYQIAYRLASSSPHTFTTVEVGATVRQFTATDLAPESAYIFRLSAKTRQGWGEPLEATVITTEKRERPAPPRELLVPQAEVTARSLRLQWVPGSDGASPIRYFTMQVRELPRGEWQTYSSSISHEATACVVDRLRPFTSYKLRLKATNDIGDSDFSSETEAVTTLQDVPGEPPGSVSATPHTTSSVLIQWQPPRDESLNGLLQGYRIYYRELEYEAGSGTEAKTLKNPIALHAELTAQSSFKTVNSSSTSTMCELTHLKKYRRYEVIMTAYNIIGESPASAPVEVFVGEAAPAMAPQNVQVTPLTASQLEVTWDPPPPESQNGNIQGYKIYYWEADSQNETEKMKVLFLPEPVVRLKNLTSHTKYLVSISAFNAAGDGPKSDPQQGRTHQAAPGAPSFLAFSEITSTTLNVSWGEPAAANGILQGYRVVYEPLAPVQGVSKVVTVEVRGNWQRWLKVRDLTKGVTYFFRVQARTITYGPELQANITAGPAEGSPGSPRDVLVTKSASELTLQWTEGHSGDTPTTGYVIEARPSDEGLWDMFVKDIPRSATSYTLSLDKLRQGVTYEFRVVAVNEAGYGEPSNPSTAVSAQVEAPFYEEWWFLLVMALSSLIVILLVVFALVLHGQNKKYKNCSTGKGISTMEESVTLDNGGFAALELSSRHLNVKSTFSKKNGTRSPPRPSPGGLHYSDEDICNKYNGAVLTESVSLKEKSADASESEATDSDYEDALPKHSFVNHYMSDPTYYNSWKRRAQGRAPAPHRYEAVAGSEAGAQLHPVITTQSAGGVYTPAGPGARTPLTGFSSFV</sequence>
<proteinExistence type="evidence at protein level"/>
<feature type="signal peptide" evidence="4">
    <location>
        <begin position="1"/>
        <end status="unknown"/>
    </location>
</feature>
<feature type="chain" id="PRO_0000226975" description="Protein sidekick-1">
    <location>
        <begin status="unknown"/>
        <end position="2213"/>
    </location>
</feature>
<feature type="topological domain" description="Extracellular" evidence="4">
    <location>
        <begin status="unknown"/>
        <end position="2009"/>
    </location>
</feature>
<feature type="transmembrane region" description="Helical" evidence="4">
    <location>
        <begin position="2010"/>
        <end position="2030"/>
    </location>
</feature>
<feature type="topological domain" description="Cytoplasmic" evidence="4">
    <location>
        <begin position="2031"/>
        <end position="2213"/>
    </location>
</feature>
<feature type="domain" description="Ig-like C2-type 1">
    <location>
        <begin position="104"/>
        <end position="186"/>
    </location>
</feature>
<feature type="domain" description="Ig-like C2-type 2">
    <location>
        <begin position="191"/>
        <end position="277"/>
    </location>
</feature>
<feature type="domain" description="Ig-like C2-type 3">
    <location>
        <begin position="293"/>
        <end position="378"/>
    </location>
</feature>
<feature type="domain" description="Ig-like C2-type 4">
    <location>
        <begin position="386"/>
        <end position="476"/>
    </location>
</feature>
<feature type="domain" description="Ig-like C2-type 5">
    <location>
        <begin position="480"/>
        <end position="569"/>
    </location>
</feature>
<feature type="domain" description="Ig-like C2-type 6">
    <location>
        <begin position="574"/>
        <end position="663"/>
    </location>
</feature>
<feature type="domain" description="Fibronectin type-III 1" evidence="6">
    <location>
        <begin position="670"/>
        <end position="766"/>
    </location>
</feature>
<feature type="domain" description="Fibronectin type-III 2" evidence="6">
    <location>
        <begin position="771"/>
        <end position="867"/>
    </location>
</feature>
<feature type="domain" description="Fibronectin type-III 3" evidence="6">
    <location>
        <begin position="872"/>
        <end position="970"/>
    </location>
</feature>
<feature type="domain" description="Fibronectin type-III 4" evidence="6">
    <location>
        <begin position="974"/>
        <end position="1068"/>
    </location>
</feature>
<feature type="domain" description="Fibronectin type-III 5" evidence="6">
    <location>
        <begin position="1072"/>
        <end position="1171"/>
    </location>
</feature>
<feature type="domain" description="Fibronectin type-III 6" evidence="6">
    <location>
        <begin position="1176"/>
        <end position="1274"/>
    </location>
</feature>
<feature type="domain" description="Fibronectin type-III 7" evidence="6">
    <location>
        <begin position="1279"/>
        <end position="1376"/>
    </location>
</feature>
<feature type="domain" description="Fibronectin type-III 8" evidence="6">
    <location>
        <begin position="1380"/>
        <end position="1474"/>
    </location>
</feature>
<feature type="domain" description="Fibronectin type-III 9" evidence="6">
    <location>
        <begin position="1479"/>
        <end position="1576"/>
    </location>
</feature>
<feature type="domain" description="Fibronectin type-III 10" evidence="6">
    <location>
        <begin position="1581"/>
        <end position="1699"/>
    </location>
</feature>
<feature type="domain" description="Fibronectin type-III 11" evidence="6">
    <location>
        <begin position="1704"/>
        <end position="1800"/>
    </location>
</feature>
<feature type="domain" description="Fibronectin type-III 12" evidence="6">
    <location>
        <begin position="1804"/>
        <end position="1899"/>
    </location>
</feature>
<feature type="domain" description="Fibronectin type-III 13" evidence="6">
    <location>
        <begin position="1902"/>
        <end position="2000"/>
    </location>
</feature>
<feature type="region of interest" description="Disordered" evidence="7">
    <location>
        <begin position="1"/>
        <end position="73"/>
    </location>
</feature>
<feature type="region of interest" description="Disordered" evidence="7">
    <location>
        <begin position="2075"/>
        <end position="2098"/>
    </location>
</feature>
<feature type="short sequence motif" description="PDZ-binding" evidence="2">
    <location>
        <begin position="2207"/>
        <end position="2213"/>
    </location>
</feature>
<feature type="compositionally biased region" description="Low complexity" evidence="7">
    <location>
        <begin position="23"/>
        <end position="38"/>
    </location>
</feature>
<feature type="glycosylation site" description="N-linked (GlcNAc...) asparagine" evidence="4">
    <location>
        <position position="271"/>
    </location>
</feature>
<feature type="glycosylation site" description="N-linked (GlcNAc...) asparagine" evidence="4">
    <location>
        <position position="301"/>
    </location>
</feature>
<feature type="glycosylation site" description="N-linked (GlcNAc...) asparagine" evidence="4">
    <location>
        <position position="550"/>
    </location>
</feature>
<feature type="glycosylation site" description="N-linked (GlcNAc...) asparagine" evidence="4">
    <location>
        <position position="563"/>
    </location>
</feature>
<feature type="glycosylation site" description="N-linked (GlcNAc...) asparagine" evidence="4">
    <location>
        <position position="572"/>
    </location>
</feature>
<feature type="glycosylation site" description="N-linked (GlcNAc...) asparagine" evidence="4">
    <location>
        <position position="655"/>
    </location>
</feature>
<feature type="glycosylation site" description="N-linked (GlcNAc...) asparagine" evidence="4">
    <location>
        <position position="679"/>
    </location>
</feature>
<feature type="glycosylation site" description="N-linked (GlcNAc...) asparagine" evidence="4">
    <location>
        <position position="782"/>
    </location>
</feature>
<feature type="glycosylation site" description="N-linked (GlcNAc...) asparagine" evidence="4">
    <location>
        <position position="821"/>
    </location>
</feature>
<feature type="glycosylation site" description="N-linked (GlcNAc...) asparagine" evidence="4">
    <location>
        <position position="882"/>
    </location>
</feature>
<feature type="glycosylation site" description="N-linked (GlcNAc...) asparagine" evidence="4">
    <location>
        <position position="1015"/>
    </location>
</feature>
<feature type="glycosylation site" description="N-linked (GlcNAc...) asparagine" evidence="4">
    <location>
        <position position="1024"/>
    </location>
</feature>
<feature type="glycosylation site" description="N-linked (GlcNAc...) asparagine" evidence="4">
    <location>
        <position position="1282"/>
    </location>
</feature>
<feature type="glycosylation site" description="N-linked (GlcNAc...) asparagine" evidence="4">
    <location>
        <position position="1333"/>
    </location>
</feature>
<feature type="glycosylation site" description="N-linked (GlcNAc...) asparagine" evidence="4">
    <location>
        <position position="1654"/>
    </location>
</feature>
<feature type="glycosylation site" description="N-linked (GlcNAc...) asparagine" evidence="4">
    <location>
        <position position="1748"/>
    </location>
</feature>
<feature type="glycosylation site" description="N-linked (GlcNAc...) asparagine" evidence="4">
    <location>
        <position position="1767"/>
    </location>
</feature>
<feature type="glycosylation site" description="N-linked (GlcNAc...) asparagine" evidence="4">
    <location>
        <position position="1819"/>
    </location>
</feature>
<feature type="glycosylation site" description="N-linked (GlcNAc...) asparagine" evidence="4">
    <location>
        <position position="1893"/>
    </location>
</feature>
<feature type="disulfide bond" evidence="5">
    <location>
        <begin position="126"/>
        <end position="169"/>
    </location>
</feature>
<feature type="disulfide bond" evidence="5">
    <location>
        <begin position="315"/>
        <end position="362"/>
    </location>
</feature>
<feature type="disulfide bond" evidence="5">
    <location>
        <begin position="408"/>
        <end position="458"/>
    </location>
</feature>
<feature type="disulfide bond" evidence="5">
    <location>
        <begin position="501"/>
        <end position="553"/>
    </location>
</feature>
<feature type="disulfide bond" evidence="5">
    <location>
        <begin position="595"/>
        <end position="647"/>
    </location>
</feature>
<feature type="splice variant" id="VSP_017517" description="In isoform 2." evidence="10">
    <location>
        <begin position="1"/>
        <end position="1940"/>
    </location>
</feature>
<feature type="splice variant" id="VSP_017518" description="In isoform 3." evidence="12">
    <location>
        <begin position="1643"/>
        <end position="1662"/>
    </location>
</feature>
<feature type="splice variant" id="VSP_017519" description="In isoform 2." evidence="10">
    <original>PS</original>
    <variation>ME</variation>
    <location>
        <begin position="1941"/>
        <end position="1942"/>
    </location>
</feature>
<feature type="sequence variant" id="VAR_025529" description="In dbSNP:rs11978101." evidence="9">
    <original>D</original>
    <variation>N</variation>
    <location>
        <position position="1016"/>
    </location>
</feature>
<feature type="sequence variant" id="VAR_025530" description="In dbSNP:rs671694." evidence="9">
    <original>H</original>
    <variation>R</variation>
    <location>
        <position position="1641"/>
    </location>
</feature>
<feature type="sequence conflict" description="In Ref. 1; AAP75619 and 2; BAB71066." evidence="13" ref="1 2">
    <original>S</original>
    <variation>P</variation>
    <location>
        <position position="58"/>
    </location>
</feature>
<feature type="sequence conflict" description="In Ref. 1; AAP75619 and 2; BAB71066." evidence="13" ref="1 2">
    <original>R</original>
    <variation>H</variation>
    <location>
        <position position="346"/>
    </location>
</feature>
<feature type="sequence conflict" description="In Ref. 1; AAP75619 and 2; BAB71066." evidence="13" ref="1 2">
    <original>N</original>
    <variation>S</variation>
    <location>
        <position position="711"/>
    </location>
</feature>
<feature type="sequence conflict" description="In Ref. 4; BAB84909." evidence="13" ref="4">
    <original>H</original>
    <variation>D</variation>
    <location>
        <position position="1666"/>
    </location>
</feature>
<organism>
    <name type="scientific">Homo sapiens</name>
    <name type="common">Human</name>
    <dbReference type="NCBI Taxonomy" id="9606"/>
    <lineage>
        <taxon>Eukaryota</taxon>
        <taxon>Metazoa</taxon>
        <taxon>Chordata</taxon>
        <taxon>Craniata</taxon>
        <taxon>Vertebrata</taxon>
        <taxon>Euteleostomi</taxon>
        <taxon>Mammalia</taxon>
        <taxon>Eutheria</taxon>
        <taxon>Euarchontoglires</taxon>
        <taxon>Primates</taxon>
        <taxon>Haplorrhini</taxon>
        <taxon>Catarrhini</taxon>
        <taxon>Hominidae</taxon>
        <taxon>Homo</taxon>
    </lineage>
</organism>
<keyword id="KW-0025">Alternative splicing</keyword>
<keyword id="KW-0130">Cell adhesion</keyword>
<keyword id="KW-1003">Cell membrane</keyword>
<keyword id="KW-1015">Disulfide bond</keyword>
<keyword id="KW-0325">Glycoprotein</keyword>
<keyword id="KW-0393">Immunoglobulin domain</keyword>
<keyword id="KW-0472">Membrane</keyword>
<keyword id="KW-1267">Proteomics identification</keyword>
<keyword id="KW-1185">Reference proteome</keyword>
<keyword id="KW-0677">Repeat</keyword>
<keyword id="KW-0732">Signal</keyword>
<keyword id="KW-0770">Synapse</keyword>
<keyword id="KW-0812">Transmembrane</keyword>
<keyword id="KW-1133">Transmembrane helix</keyword>
<dbReference type="EMBL" id="AY310398">
    <property type="protein sequence ID" value="AAP75619.1"/>
    <property type="molecule type" value="mRNA"/>
</dbReference>
<dbReference type="EMBL" id="AK055987">
    <property type="protein sequence ID" value="BAB71066.1"/>
    <property type="molecule type" value="mRNA"/>
</dbReference>
<dbReference type="EMBL" id="AC004935">
    <property type="status" value="NOT_ANNOTATED_CDS"/>
    <property type="molecule type" value="Genomic_DNA"/>
</dbReference>
<dbReference type="EMBL" id="AC004984">
    <property type="status" value="NOT_ANNOTATED_CDS"/>
    <property type="molecule type" value="Genomic_DNA"/>
</dbReference>
<dbReference type="EMBL" id="AC011284">
    <property type="status" value="NOT_ANNOTATED_CDS"/>
    <property type="molecule type" value="Genomic_DNA"/>
</dbReference>
<dbReference type="EMBL" id="AC015968">
    <property type="status" value="NOT_ANNOTATED_CDS"/>
    <property type="molecule type" value="Genomic_DNA"/>
</dbReference>
<dbReference type="EMBL" id="AC069286">
    <property type="status" value="NOT_ANNOTATED_CDS"/>
    <property type="molecule type" value="Genomic_DNA"/>
</dbReference>
<dbReference type="EMBL" id="AC073316">
    <property type="status" value="NOT_ANNOTATED_CDS"/>
    <property type="molecule type" value="Genomic_DNA"/>
</dbReference>
<dbReference type="EMBL" id="AC073550">
    <property type="status" value="NOT_ANNOTATED_CDS"/>
    <property type="molecule type" value="Genomic_DNA"/>
</dbReference>
<dbReference type="EMBL" id="AC079231">
    <property type="status" value="NOT_ANNOTATED_CDS"/>
    <property type="molecule type" value="Genomic_DNA"/>
</dbReference>
<dbReference type="EMBL" id="AC092427">
    <property type="status" value="NOT_ANNOTATED_CDS"/>
    <property type="molecule type" value="Genomic_DNA"/>
</dbReference>
<dbReference type="EMBL" id="AK074077">
    <property type="protein sequence ID" value="BAB84903.1"/>
    <property type="molecule type" value="mRNA"/>
</dbReference>
<dbReference type="EMBL" id="AK074083">
    <property type="protein sequence ID" value="BAB84909.1"/>
    <property type="molecule type" value="mRNA"/>
</dbReference>
<dbReference type="CCDS" id="CCDS34590.1">
    <molecule id="Q7Z5N4-1"/>
</dbReference>
<dbReference type="RefSeq" id="NP_689957.3">
    <molecule id="Q7Z5N4-1"/>
    <property type="nucleotide sequence ID" value="NM_152744.3"/>
</dbReference>
<dbReference type="SMR" id="Q7Z5N4"/>
<dbReference type="BioGRID" id="128768">
    <property type="interactions" value="21"/>
</dbReference>
<dbReference type="FunCoup" id="Q7Z5N4">
    <property type="interactions" value="531"/>
</dbReference>
<dbReference type="IntAct" id="Q7Z5N4">
    <property type="interactions" value="11"/>
</dbReference>
<dbReference type="MINT" id="Q7Z5N4"/>
<dbReference type="STRING" id="9606.ENSP00000385899"/>
<dbReference type="CarbonylDB" id="Q7Z5N4"/>
<dbReference type="GlyCosmos" id="Q7Z5N4">
    <property type="glycosylation" value="19 sites, No reported glycans"/>
</dbReference>
<dbReference type="GlyGen" id="Q7Z5N4">
    <property type="glycosylation" value="20 sites, 9 N-linked glycans (8 sites), 1 O-linked glycan (1 site)"/>
</dbReference>
<dbReference type="iPTMnet" id="Q7Z5N4"/>
<dbReference type="PhosphoSitePlus" id="Q7Z5N4"/>
<dbReference type="BioMuta" id="SDK1"/>
<dbReference type="DMDM" id="296452965"/>
<dbReference type="jPOST" id="Q7Z5N4"/>
<dbReference type="MassIVE" id="Q7Z5N4"/>
<dbReference type="PaxDb" id="9606-ENSP00000385899"/>
<dbReference type="PeptideAtlas" id="Q7Z5N4"/>
<dbReference type="ProteomicsDB" id="69335">
    <molecule id="Q7Z5N4-1"/>
</dbReference>
<dbReference type="ProteomicsDB" id="69336">
    <molecule id="Q7Z5N4-2"/>
</dbReference>
<dbReference type="ProteomicsDB" id="69337">
    <molecule id="Q7Z5N4-3"/>
</dbReference>
<dbReference type="Pumba" id="Q7Z5N4"/>
<dbReference type="Antibodypedia" id="2506">
    <property type="antibodies" value="30 antibodies from 16 providers"/>
</dbReference>
<dbReference type="DNASU" id="221935"/>
<dbReference type="Ensembl" id="ENST00000404826.7">
    <molecule id="Q7Z5N4-1"/>
    <property type="protein sequence ID" value="ENSP00000385899.2"/>
    <property type="gene ID" value="ENSG00000146555.20"/>
</dbReference>
<dbReference type="GeneID" id="221935"/>
<dbReference type="KEGG" id="hsa:221935"/>
<dbReference type="MANE-Select" id="ENST00000404826.7">
    <property type="protein sequence ID" value="ENSP00000385899.2"/>
    <property type="RefSeq nucleotide sequence ID" value="NM_152744.4"/>
    <property type="RefSeq protein sequence ID" value="NP_689957.3"/>
</dbReference>
<dbReference type="UCSC" id="uc003smx.4">
    <molecule id="Q7Z5N4-1"/>
    <property type="organism name" value="human"/>
</dbReference>
<dbReference type="AGR" id="HGNC:19307"/>
<dbReference type="CTD" id="221935"/>
<dbReference type="DisGeNET" id="221935"/>
<dbReference type="GeneCards" id="SDK1"/>
<dbReference type="HGNC" id="HGNC:19307">
    <property type="gene designation" value="SDK1"/>
</dbReference>
<dbReference type="HPA" id="ENSG00000146555">
    <property type="expression patterns" value="Tissue enhanced (pancreas)"/>
</dbReference>
<dbReference type="MIM" id="607216">
    <property type="type" value="gene"/>
</dbReference>
<dbReference type="neXtProt" id="NX_Q7Z5N4"/>
<dbReference type="OpenTargets" id="ENSG00000146555"/>
<dbReference type="PharmGKB" id="PA134957188"/>
<dbReference type="VEuPathDB" id="HostDB:ENSG00000146555"/>
<dbReference type="eggNOG" id="KOG3510">
    <property type="taxonomic scope" value="Eukaryota"/>
</dbReference>
<dbReference type="GeneTree" id="ENSGT00940000157747"/>
<dbReference type="InParanoid" id="Q7Z5N4"/>
<dbReference type="OrthoDB" id="8923679at2759"/>
<dbReference type="PAN-GO" id="Q7Z5N4">
    <property type="GO annotations" value="4 GO annotations based on evolutionary models"/>
</dbReference>
<dbReference type="PhylomeDB" id="Q7Z5N4"/>
<dbReference type="TreeFam" id="TF316846"/>
<dbReference type="PathwayCommons" id="Q7Z5N4"/>
<dbReference type="Reactome" id="R-HSA-373756">
    <property type="pathway name" value="SDK interactions"/>
</dbReference>
<dbReference type="SignaLink" id="Q7Z5N4"/>
<dbReference type="BioGRID-ORCS" id="221935">
    <property type="hits" value="12 hits in 1142 CRISPR screens"/>
</dbReference>
<dbReference type="ChiTaRS" id="SDK1">
    <property type="organism name" value="human"/>
</dbReference>
<dbReference type="GenomeRNAi" id="221935"/>
<dbReference type="Pharos" id="Q7Z5N4">
    <property type="development level" value="Tbio"/>
</dbReference>
<dbReference type="PRO" id="PR:Q7Z5N4"/>
<dbReference type="Proteomes" id="UP000005640">
    <property type="component" value="Chromosome 7"/>
</dbReference>
<dbReference type="RNAct" id="Q7Z5N4">
    <property type="molecule type" value="protein"/>
</dbReference>
<dbReference type="Bgee" id="ENSG00000146555">
    <property type="expression patterns" value="Expressed in popliteal artery and 119 other cell types or tissues"/>
</dbReference>
<dbReference type="ExpressionAtlas" id="Q7Z5N4">
    <property type="expression patterns" value="baseline and differential"/>
</dbReference>
<dbReference type="GO" id="GO:0005886">
    <property type="term" value="C:plasma membrane"/>
    <property type="evidence" value="ECO:0000304"/>
    <property type="project" value="Reactome"/>
</dbReference>
<dbReference type="GO" id="GO:0045202">
    <property type="term" value="C:synapse"/>
    <property type="evidence" value="ECO:0000250"/>
    <property type="project" value="UniProtKB"/>
</dbReference>
<dbReference type="GO" id="GO:0042802">
    <property type="term" value="F:identical protein binding"/>
    <property type="evidence" value="ECO:0000250"/>
    <property type="project" value="UniProtKB"/>
</dbReference>
<dbReference type="GO" id="GO:0048148">
    <property type="term" value="P:behavioral response to cocaine"/>
    <property type="evidence" value="ECO:0007669"/>
    <property type="project" value="Ensembl"/>
</dbReference>
<dbReference type="GO" id="GO:0007156">
    <property type="term" value="P:homophilic cell adhesion via plasma membrane adhesion molecules"/>
    <property type="evidence" value="ECO:0000250"/>
    <property type="project" value="UniProtKB"/>
</dbReference>
<dbReference type="GO" id="GO:0060998">
    <property type="term" value="P:regulation of dendritic spine development"/>
    <property type="evidence" value="ECO:0007669"/>
    <property type="project" value="Ensembl"/>
</dbReference>
<dbReference type="GO" id="GO:0010842">
    <property type="term" value="P:retina layer formation"/>
    <property type="evidence" value="ECO:0000250"/>
    <property type="project" value="UniProtKB"/>
</dbReference>
<dbReference type="GO" id="GO:0007416">
    <property type="term" value="P:synapse assembly"/>
    <property type="evidence" value="ECO:0000250"/>
    <property type="project" value="UniProtKB"/>
</dbReference>
<dbReference type="CDD" id="cd00063">
    <property type="entry name" value="FN3"/>
    <property type="match status" value="13"/>
</dbReference>
<dbReference type="CDD" id="cd00096">
    <property type="entry name" value="Ig"/>
    <property type="match status" value="1"/>
</dbReference>
<dbReference type="FunFam" id="2.60.40.10:FF:000202">
    <property type="entry name" value="Sidekick cell adhesion molecule 1"/>
    <property type="match status" value="1"/>
</dbReference>
<dbReference type="FunFam" id="2.60.40.10:FF:000253">
    <property type="entry name" value="Sidekick cell adhesion molecule 1"/>
    <property type="match status" value="1"/>
</dbReference>
<dbReference type="FunFam" id="2.60.40.10:FF:000158">
    <property type="entry name" value="Sidekick cell adhesion molecule 2"/>
    <property type="match status" value="1"/>
</dbReference>
<dbReference type="FunFam" id="2.60.40.10:FF:000177">
    <property type="entry name" value="Sidekick cell adhesion molecule 2"/>
    <property type="match status" value="1"/>
</dbReference>
<dbReference type="FunFam" id="2.60.40.10:FF:000206">
    <property type="entry name" value="Sidekick cell adhesion molecule 2"/>
    <property type="match status" value="1"/>
</dbReference>
<dbReference type="FunFam" id="2.60.40.10:FF:000209">
    <property type="entry name" value="Sidekick cell adhesion molecule 2"/>
    <property type="match status" value="1"/>
</dbReference>
<dbReference type="FunFam" id="2.60.40.10:FF:000231">
    <property type="entry name" value="Sidekick cell adhesion molecule 2"/>
    <property type="match status" value="1"/>
</dbReference>
<dbReference type="FunFam" id="2.60.40.10:FF:000236">
    <property type="entry name" value="Sidekick cell adhesion molecule 2"/>
    <property type="match status" value="1"/>
</dbReference>
<dbReference type="FunFam" id="2.60.40.10:FF:000237">
    <property type="entry name" value="Sidekick cell adhesion molecule 2"/>
    <property type="match status" value="1"/>
</dbReference>
<dbReference type="FunFam" id="2.60.40.10:FF:000261">
    <property type="entry name" value="Sidekick cell adhesion molecule 2"/>
    <property type="match status" value="1"/>
</dbReference>
<dbReference type="FunFam" id="2.60.40.10:FF:000266">
    <property type="entry name" value="Sidekick cell adhesion molecule 2"/>
    <property type="match status" value="1"/>
</dbReference>
<dbReference type="FunFam" id="2.60.40.10:FF:000267">
    <property type="entry name" value="Sidekick cell adhesion molecule 2"/>
    <property type="match status" value="1"/>
</dbReference>
<dbReference type="FunFam" id="2.60.40.10:FF:000271">
    <property type="entry name" value="Sidekick cell adhesion molecule 2"/>
    <property type="match status" value="1"/>
</dbReference>
<dbReference type="FunFam" id="2.60.40.10:FF:000301">
    <property type="entry name" value="Sidekick cell adhesion molecule 2"/>
    <property type="match status" value="1"/>
</dbReference>
<dbReference type="FunFam" id="2.60.40.10:FF:000359">
    <property type="entry name" value="Sidekick cell adhesion molecule 2"/>
    <property type="match status" value="1"/>
</dbReference>
<dbReference type="FunFam" id="2.60.40.10:FF:000360">
    <property type="entry name" value="Sidekick cell adhesion molecule 2"/>
    <property type="match status" value="1"/>
</dbReference>
<dbReference type="FunFam" id="2.60.40.10:FF:000420">
    <property type="entry name" value="Sidekick cell adhesion molecule 2"/>
    <property type="match status" value="1"/>
</dbReference>
<dbReference type="FunFam" id="2.60.40.10:FF:000434">
    <property type="entry name" value="Sidekick cell adhesion molecule 2"/>
    <property type="match status" value="1"/>
</dbReference>
<dbReference type="FunFam" id="2.60.40.10:FF:000485">
    <property type="entry name" value="Sidekick cell adhesion molecule 2"/>
    <property type="match status" value="1"/>
</dbReference>
<dbReference type="Gene3D" id="2.60.40.10">
    <property type="entry name" value="Immunoglobulins"/>
    <property type="match status" value="19"/>
</dbReference>
<dbReference type="InterPro" id="IPR003961">
    <property type="entry name" value="FN3_dom"/>
</dbReference>
<dbReference type="InterPro" id="IPR036116">
    <property type="entry name" value="FN3_sf"/>
</dbReference>
<dbReference type="InterPro" id="IPR007110">
    <property type="entry name" value="Ig-like_dom"/>
</dbReference>
<dbReference type="InterPro" id="IPR036179">
    <property type="entry name" value="Ig-like_dom_sf"/>
</dbReference>
<dbReference type="InterPro" id="IPR013783">
    <property type="entry name" value="Ig-like_fold"/>
</dbReference>
<dbReference type="InterPro" id="IPR013098">
    <property type="entry name" value="Ig_I-set"/>
</dbReference>
<dbReference type="InterPro" id="IPR003599">
    <property type="entry name" value="Ig_sub"/>
</dbReference>
<dbReference type="InterPro" id="IPR003598">
    <property type="entry name" value="Ig_sub2"/>
</dbReference>
<dbReference type="InterPro" id="IPR050964">
    <property type="entry name" value="Striated_Muscle_Regulatory"/>
</dbReference>
<dbReference type="PANTHER" id="PTHR13817:SF73">
    <property type="entry name" value="FIBRONECTIN TYPE-III DOMAIN-CONTAINING PROTEIN"/>
    <property type="match status" value="1"/>
</dbReference>
<dbReference type="PANTHER" id="PTHR13817">
    <property type="entry name" value="TITIN"/>
    <property type="match status" value="1"/>
</dbReference>
<dbReference type="Pfam" id="PF00041">
    <property type="entry name" value="fn3"/>
    <property type="match status" value="13"/>
</dbReference>
<dbReference type="Pfam" id="PF07679">
    <property type="entry name" value="I-set"/>
    <property type="match status" value="4"/>
</dbReference>
<dbReference type="Pfam" id="PF13927">
    <property type="entry name" value="Ig_3"/>
    <property type="match status" value="2"/>
</dbReference>
<dbReference type="PRINTS" id="PR00014">
    <property type="entry name" value="FNTYPEIII"/>
</dbReference>
<dbReference type="SMART" id="SM00060">
    <property type="entry name" value="FN3"/>
    <property type="match status" value="13"/>
</dbReference>
<dbReference type="SMART" id="SM00409">
    <property type="entry name" value="IG"/>
    <property type="match status" value="6"/>
</dbReference>
<dbReference type="SMART" id="SM00408">
    <property type="entry name" value="IGc2"/>
    <property type="match status" value="6"/>
</dbReference>
<dbReference type="SUPFAM" id="SSF49265">
    <property type="entry name" value="Fibronectin type III"/>
    <property type="match status" value="7"/>
</dbReference>
<dbReference type="SUPFAM" id="SSF48726">
    <property type="entry name" value="Immunoglobulin"/>
    <property type="match status" value="6"/>
</dbReference>
<dbReference type="PROSITE" id="PS50853">
    <property type="entry name" value="FN3"/>
    <property type="match status" value="13"/>
</dbReference>
<dbReference type="PROSITE" id="PS50835">
    <property type="entry name" value="IG_LIKE"/>
    <property type="match status" value="5"/>
</dbReference>